<name>IFNA7_HUMAN</name>
<proteinExistence type="evidence at protein level"/>
<organism>
    <name type="scientific">Homo sapiens</name>
    <name type="common">Human</name>
    <dbReference type="NCBI Taxonomy" id="9606"/>
    <lineage>
        <taxon>Eukaryota</taxon>
        <taxon>Metazoa</taxon>
        <taxon>Chordata</taxon>
        <taxon>Craniata</taxon>
        <taxon>Vertebrata</taxon>
        <taxon>Euteleostomi</taxon>
        <taxon>Mammalia</taxon>
        <taxon>Eutheria</taxon>
        <taxon>Euarchontoglires</taxon>
        <taxon>Primates</taxon>
        <taxon>Haplorrhini</taxon>
        <taxon>Catarrhini</taxon>
        <taxon>Hominidae</taxon>
        <taxon>Homo</taxon>
    </lineage>
</organism>
<accession>P01567</accession>
<accession>Q14607</accession>
<accession>Q5VV14</accession>
<dbReference type="EMBL" id="V00531">
    <property type="protein sequence ID" value="CAA23792.1"/>
    <property type="molecule type" value="Genomic_DNA"/>
</dbReference>
<dbReference type="EMBL" id="X02960">
    <property type="protein sequence ID" value="CAA26706.1"/>
    <property type="molecule type" value="Genomic_DNA"/>
</dbReference>
<dbReference type="EMBL" id="M34913">
    <property type="protein sequence ID" value="AAA36039.1"/>
    <property type="molecule type" value="mRNA"/>
</dbReference>
<dbReference type="EMBL" id="AL512606">
    <property type="status" value="NOT_ANNOTATED_CDS"/>
    <property type="molecule type" value="Genomic_DNA"/>
</dbReference>
<dbReference type="EMBL" id="CH471071">
    <property type="protein sequence ID" value="EAW58620.1"/>
    <property type="molecule type" value="Genomic_DNA"/>
</dbReference>
<dbReference type="EMBL" id="BC074991">
    <property type="protein sequence ID" value="AAH74991.1"/>
    <property type="molecule type" value="mRNA"/>
</dbReference>
<dbReference type="EMBL" id="BC074992">
    <property type="protein sequence ID" value="AAH74992.1"/>
    <property type="molecule type" value="mRNA"/>
</dbReference>
<dbReference type="EMBL" id="BC113994">
    <property type="protein sequence ID" value="AAI13995.1"/>
    <property type="molecule type" value="mRNA"/>
</dbReference>
<dbReference type="EMBL" id="BC114000">
    <property type="protein sequence ID" value="AAI14001.1"/>
    <property type="molecule type" value="mRNA"/>
</dbReference>
<dbReference type="CCDS" id="CCDS34995.1"/>
<dbReference type="PIR" id="A01831">
    <property type="entry name" value="IVHUA0"/>
</dbReference>
<dbReference type="PIR" id="F25843">
    <property type="entry name" value="F25843"/>
</dbReference>
<dbReference type="PIR" id="I53102">
    <property type="entry name" value="I53102"/>
</dbReference>
<dbReference type="RefSeq" id="NP_066401.2">
    <property type="nucleotide sequence ID" value="NM_021057.2"/>
</dbReference>
<dbReference type="SMR" id="P01567"/>
<dbReference type="BioGRID" id="109667">
    <property type="interactions" value="10"/>
</dbReference>
<dbReference type="ComplexPortal" id="CPX-5997">
    <property type="entry name" value="Interferon alpha receptor-ligand complex, IFNA7 variant"/>
</dbReference>
<dbReference type="FunCoup" id="P01567">
    <property type="interactions" value="945"/>
</dbReference>
<dbReference type="IntAct" id="P01567">
    <property type="interactions" value="8"/>
</dbReference>
<dbReference type="STRING" id="9606.ENSP00000239347"/>
<dbReference type="ChEMBL" id="CHEMBL3856161"/>
<dbReference type="iPTMnet" id="P01567"/>
<dbReference type="PhosphoSitePlus" id="P01567"/>
<dbReference type="BioMuta" id="IFNA7"/>
<dbReference type="DMDM" id="124442"/>
<dbReference type="MassIVE" id="P01567"/>
<dbReference type="PaxDb" id="9606-ENSP00000239347"/>
<dbReference type="PeptideAtlas" id="P01567"/>
<dbReference type="ABCD" id="P01567">
    <property type="antibodies" value="3 sequenced antibodies"/>
</dbReference>
<dbReference type="Antibodypedia" id="24856">
    <property type="antibodies" value="95 antibodies from 20 providers"/>
</dbReference>
<dbReference type="DNASU" id="3444"/>
<dbReference type="Ensembl" id="ENST00000239347.3">
    <property type="protein sequence ID" value="ENSP00000239347.3"/>
    <property type="gene ID" value="ENSG00000214042.1"/>
</dbReference>
<dbReference type="GeneID" id="3444"/>
<dbReference type="KEGG" id="hsa:3444"/>
<dbReference type="MANE-Select" id="ENST00000239347.3">
    <property type="protein sequence ID" value="ENSP00000239347.3"/>
    <property type="RefSeq nucleotide sequence ID" value="NM_021057.2"/>
    <property type="RefSeq protein sequence ID" value="NP_066401.2"/>
</dbReference>
<dbReference type="UCSC" id="uc003zop.1">
    <property type="organism name" value="human"/>
</dbReference>
<dbReference type="AGR" id="HGNC:5428"/>
<dbReference type="CTD" id="3444"/>
<dbReference type="GeneCards" id="IFNA7"/>
<dbReference type="HGNC" id="HGNC:5428">
    <property type="gene designation" value="IFNA7"/>
</dbReference>
<dbReference type="HPA" id="ENSG00000214042">
    <property type="expression patterns" value="Not detected"/>
</dbReference>
<dbReference type="MIM" id="147567">
    <property type="type" value="gene"/>
</dbReference>
<dbReference type="neXtProt" id="NX_P01567"/>
<dbReference type="OpenTargets" id="ENSG00000214042"/>
<dbReference type="PharmGKB" id="PA29667"/>
<dbReference type="VEuPathDB" id="HostDB:ENSG00000214042"/>
<dbReference type="eggNOG" id="ENOG502SQAC">
    <property type="taxonomic scope" value="Eukaryota"/>
</dbReference>
<dbReference type="GeneTree" id="ENSGT01000000214430"/>
<dbReference type="HOGENOM" id="CLU_109427_0_0_1"/>
<dbReference type="InParanoid" id="P01567"/>
<dbReference type="OMA" id="CFHKIPD"/>
<dbReference type="OrthoDB" id="9481177at2759"/>
<dbReference type="PAN-GO" id="P01567">
    <property type="GO annotations" value="12 GO annotations based on evolutionary models"/>
</dbReference>
<dbReference type="PhylomeDB" id="P01567"/>
<dbReference type="TreeFam" id="TF336177"/>
<dbReference type="PathwayCommons" id="P01567"/>
<dbReference type="Reactome" id="R-HSA-909733">
    <property type="pathway name" value="Interferon alpha/beta signaling"/>
</dbReference>
<dbReference type="Reactome" id="R-HSA-912694">
    <property type="pathway name" value="Regulation of IFNA/IFNB signaling"/>
</dbReference>
<dbReference type="Reactome" id="R-HSA-933541">
    <property type="pathway name" value="TRAF6 mediated IRF7 activation"/>
</dbReference>
<dbReference type="Reactome" id="R-HSA-9705671">
    <property type="pathway name" value="SARS-CoV-2 activates/modulates innate and adaptive immune responses"/>
</dbReference>
<dbReference type="Reactome" id="R-HSA-983231">
    <property type="pathway name" value="Factors involved in megakaryocyte development and platelet production"/>
</dbReference>
<dbReference type="Reactome" id="R-HSA-9833109">
    <property type="pathway name" value="Evasion by RSV of host interferon responses"/>
</dbReference>
<dbReference type="SignaLink" id="P01567"/>
<dbReference type="BioGRID-ORCS" id="3444">
    <property type="hits" value="9 hits in 1069 CRISPR screens"/>
</dbReference>
<dbReference type="GeneWiki" id="IFNA7"/>
<dbReference type="GenomeRNAi" id="3444"/>
<dbReference type="Pharos" id="P01567">
    <property type="development level" value="Tbio"/>
</dbReference>
<dbReference type="PRO" id="PR:P01567"/>
<dbReference type="Proteomes" id="UP000005640">
    <property type="component" value="Chromosome 9"/>
</dbReference>
<dbReference type="RNAct" id="P01567">
    <property type="molecule type" value="protein"/>
</dbReference>
<dbReference type="Bgee" id="ENSG00000214042">
    <property type="expression patterns" value="Expressed in pancreatic ductal cell and 4 other cell types or tissues"/>
</dbReference>
<dbReference type="GO" id="GO:0005576">
    <property type="term" value="C:extracellular region"/>
    <property type="evidence" value="ECO:0000304"/>
    <property type="project" value="Reactome"/>
</dbReference>
<dbReference type="GO" id="GO:0005615">
    <property type="term" value="C:extracellular space"/>
    <property type="evidence" value="ECO:0000318"/>
    <property type="project" value="GO_Central"/>
</dbReference>
<dbReference type="GO" id="GO:0005125">
    <property type="term" value="F:cytokine activity"/>
    <property type="evidence" value="ECO:0000318"/>
    <property type="project" value="GO_Central"/>
</dbReference>
<dbReference type="GO" id="GO:0005132">
    <property type="term" value="F:type I interferon receptor binding"/>
    <property type="evidence" value="ECO:0000318"/>
    <property type="project" value="GO_Central"/>
</dbReference>
<dbReference type="GO" id="GO:0002250">
    <property type="term" value="P:adaptive immune response"/>
    <property type="evidence" value="ECO:0000318"/>
    <property type="project" value="GO_Central"/>
</dbReference>
<dbReference type="GO" id="GO:0002312">
    <property type="term" value="P:B cell activation involved in immune response"/>
    <property type="evidence" value="ECO:0000318"/>
    <property type="project" value="GO_Central"/>
</dbReference>
<dbReference type="GO" id="GO:0007267">
    <property type="term" value="P:cell-cell signaling"/>
    <property type="evidence" value="ECO:0000304"/>
    <property type="project" value="ProtInc"/>
</dbReference>
<dbReference type="GO" id="GO:0098586">
    <property type="term" value="P:cellular response to virus"/>
    <property type="evidence" value="ECO:0000303"/>
    <property type="project" value="ComplexPortal"/>
</dbReference>
<dbReference type="GO" id="GO:0051607">
    <property type="term" value="P:defense response to virus"/>
    <property type="evidence" value="ECO:0007669"/>
    <property type="project" value="UniProtKB-KW"/>
</dbReference>
<dbReference type="GO" id="GO:0006959">
    <property type="term" value="P:humoral immune response"/>
    <property type="evidence" value="ECO:0000318"/>
    <property type="project" value="GO_Central"/>
</dbReference>
<dbReference type="GO" id="GO:0002323">
    <property type="term" value="P:natural killer cell activation involved in immune response"/>
    <property type="evidence" value="ECO:0000318"/>
    <property type="project" value="GO_Central"/>
</dbReference>
<dbReference type="GO" id="GO:0043330">
    <property type="term" value="P:response to exogenous dsRNA"/>
    <property type="evidence" value="ECO:0000318"/>
    <property type="project" value="GO_Central"/>
</dbReference>
<dbReference type="GO" id="GO:0009615">
    <property type="term" value="P:response to virus"/>
    <property type="evidence" value="ECO:0000304"/>
    <property type="project" value="ProtInc"/>
</dbReference>
<dbReference type="GO" id="GO:0002286">
    <property type="term" value="P:T cell activation involved in immune response"/>
    <property type="evidence" value="ECO:0000318"/>
    <property type="project" value="GO_Central"/>
</dbReference>
<dbReference type="GO" id="GO:0060337">
    <property type="term" value="P:type I interferon-mediated signaling pathway"/>
    <property type="evidence" value="ECO:0000318"/>
    <property type="project" value="GO_Central"/>
</dbReference>
<dbReference type="CDD" id="cd00095">
    <property type="entry name" value="IFab"/>
    <property type="match status" value="1"/>
</dbReference>
<dbReference type="FunFam" id="1.20.1250.10:FF:000001">
    <property type="entry name" value="Interferon alpha"/>
    <property type="match status" value="1"/>
</dbReference>
<dbReference type="Gene3D" id="1.20.1250.10">
    <property type="match status" value="1"/>
</dbReference>
<dbReference type="InterPro" id="IPR009079">
    <property type="entry name" value="4_helix_cytokine-like_core"/>
</dbReference>
<dbReference type="InterPro" id="IPR000471">
    <property type="entry name" value="Interferon_alpha/beta/delta"/>
</dbReference>
<dbReference type="PANTHER" id="PTHR11691:SF69">
    <property type="entry name" value="INTERFERON ALPHA-7"/>
    <property type="match status" value="1"/>
</dbReference>
<dbReference type="PANTHER" id="PTHR11691">
    <property type="entry name" value="TYPE I INTERFERON"/>
    <property type="match status" value="1"/>
</dbReference>
<dbReference type="Pfam" id="PF00143">
    <property type="entry name" value="Interferon"/>
    <property type="match status" value="1"/>
</dbReference>
<dbReference type="PRINTS" id="PR00266">
    <property type="entry name" value="INTERFERONAB"/>
</dbReference>
<dbReference type="SMART" id="SM00076">
    <property type="entry name" value="IFabd"/>
    <property type="match status" value="1"/>
</dbReference>
<dbReference type="SUPFAM" id="SSF47266">
    <property type="entry name" value="4-helical cytokines"/>
    <property type="match status" value="1"/>
</dbReference>
<dbReference type="PROSITE" id="PS00252">
    <property type="entry name" value="INTERFERON_A_B_D"/>
    <property type="match status" value="1"/>
</dbReference>
<protein>
    <recommendedName>
        <fullName>Interferon alpha-7</fullName>
        <shortName>IFN-alpha-7</shortName>
    </recommendedName>
    <alternativeName>
        <fullName>Interferon alpha-J</fullName>
        <shortName>LeIF J</shortName>
    </alternativeName>
    <alternativeName>
        <fullName>Interferon alpha-J1</fullName>
        <shortName>IFN-alpha-J1</shortName>
    </alternativeName>
</protein>
<comment type="function">
    <text>Produced by macrophages, IFN-alpha have antiviral activities. Interferon stimulates the production of two enzymes: a protein kinase and an oligoadenylate synthetase.</text>
</comment>
<comment type="subcellular location">
    <subcellularLocation>
        <location>Secreted</location>
    </subcellularLocation>
</comment>
<comment type="similarity">
    <text evidence="3">Belongs to the alpha/beta interferon family.</text>
</comment>
<keyword id="KW-0051">Antiviral defense</keyword>
<keyword id="KW-0202">Cytokine</keyword>
<keyword id="KW-0903">Direct protein sequencing</keyword>
<keyword id="KW-1015">Disulfide bond</keyword>
<keyword id="KW-1267">Proteomics identification</keyword>
<keyword id="KW-1185">Reference proteome</keyword>
<keyword id="KW-0964">Secreted</keyword>
<keyword id="KW-0732">Signal</keyword>
<gene>
    <name type="primary">IFNA7</name>
</gene>
<evidence type="ECO:0000250" key="1"/>
<evidence type="ECO:0000269" key="2">
    <source>
    </source>
</evidence>
<evidence type="ECO:0000305" key="3"/>
<sequence length="189" mass="22107">MARSFSLLMVVLVLSYKSICSLGCDLPQTHSLRNRRALILLAQMGRISPFSCLKDRHEFRFPEEEFDGHQFQKTQAISVLHEMIQQTFNLFSTEDSSAAWEQSLLEKFSTELYQQLNDLEACVIQEVGVEETPLMNEDFILAVRKYFQRITLYLMEKKYSPCAWEVVRAEIMRSFSFSTNLKKGLRRKD</sequence>
<feature type="signal peptide" evidence="2">
    <location>
        <begin position="1"/>
        <end position="23"/>
    </location>
</feature>
<feature type="chain" id="PRO_0000016364" description="Interferon alpha-7">
    <location>
        <begin position="24"/>
        <end position="189"/>
    </location>
</feature>
<feature type="disulfide bond" evidence="1">
    <location>
        <begin position="24"/>
        <end position="122"/>
    </location>
</feature>
<feature type="disulfide bond" evidence="1">
    <location>
        <begin position="52"/>
        <end position="162"/>
    </location>
</feature>
<feature type="sequence conflict" description="In Ref. 3; AAA36039." evidence="3" ref="3">
    <original>V</original>
    <variation>A</variation>
    <location>
        <position position="10"/>
    </location>
</feature>
<feature type="sequence conflict" description="In Ref. 3; AAA36039." evidence="3" ref="3">
    <original>M</original>
    <variation>T</variation>
    <location>
        <position position="155"/>
    </location>
</feature>
<reference key="1">
    <citation type="journal article" date="1982" name="J. Mol. Biol.">
        <title>Nucleotide sequence of a portion of human chromosome 9 containing a leukocyte interferon gene cluster.</title>
        <authorList>
            <person name="Ullrich A."/>
            <person name="Gray A."/>
            <person name="Goeddel D.V."/>
            <person name="Dull T.J."/>
        </authorList>
    </citation>
    <scope>NUCLEOTIDE SEQUENCE [GENOMIC DNA]</scope>
</reference>
<reference key="2">
    <citation type="journal article" date="1985" name="J. Mol. Biol.">
        <title>Structural relationship of human interferon alpha genes and pseudogenes.</title>
        <authorList>
            <person name="Henco K."/>
            <person name="Brosius J."/>
            <person name="Fujisawa A."/>
            <person name="Fujisawa J."/>
            <person name="Haynes J.R."/>
            <person name="Hochstadt J."/>
            <person name="Kovacic T."/>
            <person name="Pasek M."/>
            <person name="Schamboeck A."/>
            <person name="Schmid J."/>
            <person name="Todokoro K."/>
            <person name="Waelchli M."/>
            <person name="Nagata S."/>
            <person name="Weissmann C."/>
        </authorList>
    </citation>
    <scope>NUCLEOTIDE SEQUENCE [GENOMIC DNA]</scope>
</reference>
<reference key="3">
    <citation type="journal article" date="1985" name="Dev. Biol. Stand.">
        <title>Cloning, expression and biological activity of a new variant of human interferon alpha identified in virus induced lymphoblastoid cells.</title>
        <authorList>
            <person name="Cohen S."/>
            <person name="Velan B."/>
            <person name="Grosfeld H."/>
            <person name="Shalita Z."/>
            <person name="Leitner M."/>
            <person name="Shafferman A."/>
        </authorList>
    </citation>
    <scope>NUCLEOTIDE SEQUENCE [MRNA]</scope>
</reference>
<reference key="4">
    <citation type="journal article" date="2004" name="Nature">
        <title>DNA sequence and analysis of human chromosome 9.</title>
        <authorList>
            <person name="Humphray S.J."/>
            <person name="Oliver K."/>
            <person name="Hunt A.R."/>
            <person name="Plumb R.W."/>
            <person name="Loveland J.E."/>
            <person name="Howe K.L."/>
            <person name="Andrews T.D."/>
            <person name="Searle S."/>
            <person name="Hunt S.E."/>
            <person name="Scott C.E."/>
            <person name="Jones M.C."/>
            <person name="Ainscough R."/>
            <person name="Almeida J.P."/>
            <person name="Ambrose K.D."/>
            <person name="Ashwell R.I.S."/>
            <person name="Babbage A.K."/>
            <person name="Babbage S."/>
            <person name="Bagguley C.L."/>
            <person name="Bailey J."/>
            <person name="Banerjee R."/>
            <person name="Barker D.J."/>
            <person name="Barlow K.F."/>
            <person name="Bates K."/>
            <person name="Beasley H."/>
            <person name="Beasley O."/>
            <person name="Bird C.P."/>
            <person name="Bray-Allen S."/>
            <person name="Brown A.J."/>
            <person name="Brown J.Y."/>
            <person name="Burford D."/>
            <person name="Burrill W."/>
            <person name="Burton J."/>
            <person name="Carder C."/>
            <person name="Carter N.P."/>
            <person name="Chapman J.C."/>
            <person name="Chen Y."/>
            <person name="Clarke G."/>
            <person name="Clark S.Y."/>
            <person name="Clee C.M."/>
            <person name="Clegg S."/>
            <person name="Collier R.E."/>
            <person name="Corby N."/>
            <person name="Crosier M."/>
            <person name="Cummings A.T."/>
            <person name="Davies J."/>
            <person name="Dhami P."/>
            <person name="Dunn M."/>
            <person name="Dutta I."/>
            <person name="Dyer L.W."/>
            <person name="Earthrowl M.E."/>
            <person name="Faulkner L."/>
            <person name="Fleming C.J."/>
            <person name="Frankish A."/>
            <person name="Frankland J.A."/>
            <person name="French L."/>
            <person name="Fricker D.G."/>
            <person name="Garner P."/>
            <person name="Garnett J."/>
            <person name="Ghori J."/>
            <person name="Gilbert J.G.R."/>
            <person name="Glison C."/>
            <person name="Grafham D.V."/>
            <person name="Gribble S."/>
            <person name="Griffiths C."/>
            <person name="Griffiths-Jones S."/>
            <person name="Grocock R."/>
            <person name="Guy J."/>
            <person name="Hall R.E."/>
            <person name="Hammond S."/>
            <person name="Harley J.L."/>
            <person name="Harrison E.S.I."/>
            <person name="Hart E.A."/>
            <person name="Heath P.D."/>
            <person name="Henderson C.D."/>
            <person name="Hopkins B.L."/>
            <person name="Howard P.J."/>
            <person name="Howden P.J."/>
            <person name="Huckle E."/>
            <person name="Johnson C."/>
            <person name="Johnson D."/>
            <person name="Joy A.A."/>
            <person name="Kay M."/>
            <person name="Keenan S."/>
            <person name="Kershaw J.K."/>
            <person name="Kimberley A.M."/>
            <person name="King A."/>
            <person name="Knights A."/>
            <person name="Laird G.K."/>
            <person name="Langford C."/>
            <person name="Lawlor S."/>
            <person name="Leongamornlert D.A."/>
            <person name="Leversha M."/>
            <person name="Lloyd C."/>
            <person name="Lloyd D.M."/>
            <person name="Lovell J."/>
            <person name="Martin S."/>
            <person name="Mashreghi-Mohammadi M."/>
            <person name="Matthews L."/>
            <person name="McLaren S."/>
            <person name="McLay K.E."/>
            <person name="McMurray A."/>
            <person name="Milne S."/>
            <person name="Nickerson T."/>
            <person name="Nisbett J."/>
            <person name="Nordsiek G."/>
            <person name="Pearce A.V."/>
            <person name="Peck A.I."/>
            <person name="Porter K.M."/>
            <person name="Pandian R."/>
            <person name="Pelan S."/>
            <person name="Phillimore B."/>
            <person name="Povey S."/>
            <person name="Ramsey Y."/>
            <person name="Rand V."/>
            <person name="Scharfe M."/>
            <person name="Sehra H.K."/>
            <person name="Shownkeen R."/>
            <person name="Sims S.K."/>
            <person name="Skuce C.D."/>
            <person name="Smith M."/>
            <person name="Steward C.A."/>
            <person name="Swarbreck D."/>
            <person name="Sycamore N."/>
            <person name="Tester J."/>
            <person name="Thorpe A."/>
            <person name="Tracey A."/>
            <person name="Tromans A."/>
            <person name="Thomas D.W."/>
            <person name="Wall M."/>
            <person name="Wallis J.M."/>
            <person name="West A.P."/>
            <person name="Whitehead S.L."/>
            <person name="Willey D.L."/>
            <person name="Williams S.A."/>
            <person name="Wilming L."/>
            <person name="Wray P.W."/>
            <person name="Young L."/>
            <person name="Ashurst J.L."/>
            <person name="Coulson A."/>
            <person name="Blocker H."/>
            <person name="Durbin R.M."/>
            <person name="Sulston J.E."/>
            <person name="Hubbard T."/>
            <person name="Jackson M.J."/>
            <person name="Bentley D.R."/>
            <person name="Beck S."/>
            <person name="Rogers J."/>
            <person name="Dunham I."/>
        </authorList>
    </citation>
    <scope>NUCLEOTIDE SEQUENCE [LARGE SCALE GENOMIC DNA]</scope>
</reference>
<reference key="5">
    <citation type="submission" date="2005-09" db="EMBL/GenBank/DDBJ databases">
        <authorList>
            <person name="Mural R.J."/>
            <person name="Istrail S."/>
            <person name="Sutton G.G."/>
            <person name="Florea L."/>
            <person name="Halpern A.L."/>
            <person name="Mobarry C.M."/>
            <person name="Lippert R."/>
            <person name="Walenz B."/>
            <person name="Shatkay H."/>
            <person name="Dew I."/>
            <person name="Miller J.R."/>
            <person name="Flanigan M.J."/>
            <person name="Edwards N.J."/>
            <person name="Bolanos R."/>
            <person name="Fasulo D."/>
            <person name="Halldorsson B.V."/>
            <person name="Hannenhalli S."/>
            <person name="Turner R."/>
            <person name="Yooseph S."/>
            <person name="Lu F."/>
            <person name="Nusskern D.R."/>
            <person name="Shue B.C."/>
            <person name="Zheng X.H."/>
            <person name="Zhong F."/>
            <person name="Delcher A.L."/>
            <person name="Huson D.H."/>
            <person name="Kravitz S.A."/>
            <person name="Mouchard L."/>
            <person name="Reinert K."/>
            <person name="Remington K.A."/>
            <person name="Clark A.G."/>
            <person name="Waterman M.S."/>
            <person name="Eichler E.E."/>
            <person name="Adams M.D."/>
            <person name="Hunkapiller M.W."/>
            <person name="Myers E.W."/>
            <person name="Venter J.C."/>
        </authorList>
    </citation>
    <scope>NUCLEOTIDE SEQUENCE [LARGE SCALE GENOMIC DNA]</scope>
</reference>
<reference key="6">
    <citation type="journal article" date="2004" name="Genome Res.">
        <title>The status, quality, and expansion of the NIH full-length cDNA project: the Mammalian Gene Collection (MGC).</title>
        <authorList>
            <consortium name="The MGC Project Team"/>
        </authorList>
    </citation>
    <scope>NUCLEOTIDE SEQUENCE [LARGE SCALE MRNA]</scope>
    <source>
        <tissue>Brain</tissue>
    </source>
</reference>
<reference key="7">
    <citation type="journal article" date="1998" name="Biochem. J.">
        <title>Identification of nine interferon-alpha subtypes produced by Sendai virus-induced human peripheral blood leucocytes.</title>
        <authorList>
            <person name="Nyman T.A."/>
            <person name="Toeloe H."/>
            <person name="Parkkinen J."/>
            <person name="Kalkkinen N."/>
        </authorList>
    </citation>
    <scope>PROTEIN SEQUENCE OF 24-57</scope>
</reference>
<reference key="8">
    <citation type="journal article" date="1996" name="J. Interferon Cytokine Res.">
        <title>Identification of interferon-alpha 7, -alpha 14, and -alpha 21 variants in the genome of a large human population.</title>
        <authorList>
            <person name="Hussain M."/>
            <person name="Gill D.S."/>
            <person name="Liao M.-J."/>
        </authorList>
    </citation>
    <scope>ABSENCE OF POLYMORPHISM</scope>
</reference>